<accession>A2REF2</accession>
<dbReference type="EC" id="2.4.2.52" evidence="1"/>
<dbReference type="EMBL" id="AM295007">
    <property type="protein sequence ID" value="CAM30227.1"/>
    <property type="molecule type" value="Genomic_DNA"/>
</dbReference>
<dbReference type="RefSeq" id="WP_011888866.1">
    <property type="nucleotide sequence ID" value="NC_009332.1"/>
</dbReference>
<dbReference type="KEGG" id="spf:SpyM50899"/>
<dbReference type="HOGENOM" id="CLU_056179_1_0_9"/>
<dbReference type="GO" id="GO:0005524">
    <property type="term" value="F:ATP binding"/>
    <property type="evidence" value="ECO:0007669"/>
    <property type="project" value="UniProtKB-KW"/>
</dbReference>
<dbReference type="GO" id="GO:0046917">
    <property type="term" value="F:triphosphoribosyl-dephospho-CoA synthase activity"/>
    <property type="evidence" value="ECO:0007669"/>
    <property type="project" value="UniProtKB-UniRule"/>
</dbReference>
<dbReference type="GO" id="GO:0051191">
    <property type="term" value="P:prosthetic group biosynthetic process"/>
    <property type="evidence" value="ECO:0007669"/>
    <property type="project" value="TreeGrafter"/>
</dbReference>
<dbReference type="Gene3D" id="1.10.4200.10">
    <property type="entry name" value="Triphosphoribosyl-dephospho-CoA protein"/>
    <property type="match status" value="1"/>
</dbReference>
<dbReference type="HAMAP" id="MF_00397">
    <property type="entry name" value="CitG"/>
    <property type="match status" value="1"/>
</dbReference>
<dbReference type="InterPro" id="IPR002736">
    <property type="entry name" value="CitG"/>
</dbReference>
<dbReference type="InterPro" id="IPR017551">
    <property type="entry name" value="TriPribosyl-deP-CoA_syn_CitG"/>
</dbReference>
<dbReference type="NCBIfam" id="TIGR03125">
    <property type="entry name" value="citrate_citG"/>
    <property type="match status" value="1"/>
</dbReference>
<dbReference type="PANTHER" id="PTHR30201:SF2">
    <property type="entry name" value="2-(5''-TRIPHOSPHORIBOSYL)-3'-DEPHOSPHOCOENZYME-A SYNTHASE"/>
    <property type="match status" value="1"/>
</dbReference>
<dbReference type="PANTHER" id="PTHR30201">
    <property type="entry name" value="TRIPHOSPHORIBOSYL-DEPHOSPHO-COA SYNTHASE"/>
    <property type="match status" value="1"/>
</dbReference>
<dbReference type="Pfam" id="PF01874">
    <property type="entry name" value="CitG"/>
    <property type="match status" value="1"/>
</dbReference>
<comment type="catalytic activity">
    <reaction evidence="1">
        <text>3'-dephospho-CoA + ATP = 2'-(5''-triphospho-alpha-D-ribosyl)-3'-dephospho-CoA + adenine</text>
        <dbReference type="Rhea" id="RHEA:15117"/>
        <dbReference type="ChEBI" id="CHEBI:16708"/>
        <dbReference type="ChEBI" id="CHEBI:30616"/>
        <dbReference type="ChEBI" id="CHEBI:57328"/>
        <dbReference type="ChEBI" id="CHEBI:61378"/>
        <dbReference type="EC" id="2.4.2.52"/>
    </reaction>
</comment>
<comment type="similarity">
    <text evidence="1">Belongs to the CitG/MdcB family.</text>
</comment>
<keyword id="KW-0067">ATP-binding</keyword>
<keyword id="KW-0547">Nucleotide-binding</keyword>
<keyword id="KW-0808">Transferase</keyword>
<gene>
    <name evidence="1" type="primary">citG</name>
    <name type="ordered locus">SpyM50899</name>
</gene>
<feature type="chain" id="PRO_1000049599" description="Probable 2-(5''-triphosphoribosyl)-3'-dephosphocoenzyme-A synthase">
    <location>
        <begin position="1"/>
        <end position="294"/>
    </location>
</feature>
<protein>
    <recommendedName>
        <fullName evidence="1">Probable 2-(5''-triphosphoribosyl)-3'-dephosphocoenzyme-A synthase</fullName>
        <shortName evidence="1">2-(5''-triphosphoribosyl)-3'-dephospho-CoA synthase</shortName>
        <ecNumber evidence="1">2.4.2.52</ecNumber>
    </recommendedName>
</protein>
<proteinExistence type="inferred from homology"/>
<sequence length="294" mass="32736">MTKAVLTSISQLALKALLYEVSLSPKPGLVDRFDNGAHDDMSFMTFIDSMIALSPFFQAYIETGFAYAKEEQLLLFNRLRQLGQKAEETMFCATQGINTHKGLNFSMALLLGATGAYLARTPHLMTDLGCFSKEDTLAICRLVKPMTAHLIQADLGHLNTKKEFTYGEQLFVTYGIKGPRGEASEGFTTLTDHALPYFRQMISQNDPETSQLRLLVYLMSIVEDGNLIHRGGIEAWKGVKADMRLLLQQDLSTTDLRLALSSYNQCLINQHLSPGGAADLLALTFYFAFLEKLL</sequence>
<name>CITG_STRPG</name>
<reference key="1">
    <citation type="journal article" date="2007" name="J. Bacteriol.">
        <title>Complete genome of acute rheumatic fever-associated serotype M5 Streptococcus pyogenes strain Manfredo.</title>
        <authorList>
            <person name="Holden M.T.G."/>
            <person name="Scott A."/>
            <person name="Cherevach I."/>
            <person name="Chillingworth T."/>
            <person name="Churcher C."/>
            <person name="Cronin A."/>
            <person name="Dowd L."/>
            <person name="Feltwell T."/>
            <person name="Hamlin N."/>
            <person name="Holroyd S."/>
            <person name="Jagels K."/>
            <person name="Moule S."/>
            <person name="Mungall K."/>
            <person name="Quail M.A."/>
            <person name="Price C."/>
            <person name="Rabbinowitsch E."/>
            <person name="Sharp S."/>
            <person name="Skelton J."/>
            <person name="Whitehead S."/>
            <person name="Barrell B.G."/>
            <person name="Kehoe M."/>
            <person name="Parkhill J."/>
        </authorList>
    </citation>
    <scope>NUCLEOTIDE SEQUENCE [LARGE SCALE GENOMIC DNA]</scope>
    <source>
        <strain>Manfredo</strain>
    </source>
</reference>
<evidence type="ECO:0000255" key="1">
    <source>
        <dbReference type="HAMAP-Rule" id="MF_00397"/>
    </source>
</evidence>
<organism>
    <name type="scientific">Streptococcus pyogenes serotype M5 (strain Manfredo)</name>
    <dbReference type="NCBI Taxonomy" id="160491"/>
    <lineage>
        <taxon>Bacteria</taxon>
        <taxon>Bacillati</taxon>
        <taxon>Bacillota</taxon>
        <taxon>Bacilli</taxon>
        <taxon>Lactobacillales</taxon>
        <taxon>Streptococcaceae</taxon>
        <taxon>Streptococcus</taxon>
    </lineage>
</organism>